<proteinExistence type="inferred from homology"/>
<name>RL31_NOCSJ</name>
<reference key="1">
    <citation type="submission" date="2006-12" db="EMBL/GenBank/DDBJ databases">
        <title>Complete sequence of chromosome 1 of Nocardioides sp. JS614.</title>
        <authorList>
            <person name="Copeland A."/>
            <person name="Lucas S."/>
            <person name="Lapidus A."/>
            <person name="Barry K."/>
            <person name="Detter J.C."/>
            <person name="Glavina del Rio T."/>
            <person name="Hammon N."/>
            <person name="Israni S."/>
            <person name="Dalin E."/>
            <person name="Tice H."/>
            <person name="Pitluck S."/>
            <person name="Thompson L.S."/>
            <person name="Brettin T."/>
            <person name="Bruce D."/>
            <person name="Han C."/>
            <person name="Tapia R."/>
            <person name="Schmutz J."/>
            <person name="Larimer F."/>
            <person name="Land M."/>
            <person name="Hauser L."/>
            <person name="Kyrpides N."/>
            <person name="Kim E."/>
            <person name="Mattes T."/>
            <person name="Gossett J."/>
            <person name="Richardson P."/>
        </authorList>
    </citation>
    <scope>NUCLEOTIDE SEQUENCE [LARGE SCALE GENOMIC DNA]</scope>
    <source>
        <strain>ATCC BAA-499 / JS614</strain>
    </source>
</reference>
<feature type="chain" id="PRO_1000126675" description="Large ribosomal subunit protein bL31">
    <location>
        <begin position="1"/>
        <end position="75"/>
    </location>
</feature>
<feature type="binding site" evidence="1">
    <location>
        <position position="16"/>
    </location>
    <ligand>
        <name>Zn(2+)</name>
        <dbReference type="ChEBI" id="CHEBI:29105"/>
    </ligand>
</feature>
<feature type="binding site" evidence="1">
    <location>
        <position position="18"/>
    </location>
    <ligand>
        <name>Zn(2+)</name>
        <dbReference type="ChEBI" id="CHEBI:29105"/>
    </ligand>
</feature>
<feature type="binding site" evidence="1">
    <location>
        <position position="38"/>
    </location>
    <ligand>
        <name>Zn(2+)</name>
        <dbReference type="ChEBI" id="CHEBI:29105"/>
    </ligand>
</feature>
<feature type="binding site" evidence="1">
    <location>
        <position position="41"/>
    </location>
    <ligand>
        <name>Zn(2+)</name>
        <dbReference type="ChEBI" id="CHEBI:29105"/>
    </ligand>
</feature>
<keyword id="KW-0479">Metal-binding</keyword>
<keyword id="KW-1185">Reference proteome</keyword>
<keyword id="KW-0687">Ribonucleoprotein</keyword>
<keyword id="KW-0689">Ribosomal protein</keyword>
<keyword id="KW-0694">RNA-binding</keyword>
<keyword id="KW-0699">rRNA-binding</keyword>
<keyword id="KW-0862">Zinc</keyword>
<comment type="function">
    <text evidence="1">Binds the 23S rRNA.</text>
</comment>
<comment type="cofactor">
    <cofactor evidence="1">
        <name>Zn(2+)</name>
        <dbReference type="ChEBI" id="CHEBI:29105"/>
    </cofactor>
    <text evidence="1">Binds 1 zinc ion per subunit.</text>
</comment>
<comment type="subunit">
    <text evidence="1">Part of the 50S ribosomal subunit.</text>
</comment>
<comment type="similarity">
    <text evidence="1">Belongs to the bacterial ribosomal protein bL31 family. Type A subfamily.</text>
</comment>
<evidence type="ECO:0000255" key="1">
    <source>
        <dbReference type="HAMAP-Rule" id="MF_00501"/>
    </source>
</evidence>
<evidence type="ECO:0000305" key="2"/>
<accession>A1SHH8</accession>
<gene>
    <name evidence="1" type="primary">rpmE</name>
    <name type="ordered locus">Noca_1750</name>
</gene>
<organism>
    <name type="scientific">Nocardioides sp. (strain ATCC BAA-499 / JS614)</name>
    <dbReference type="NCBI Taxonomy" id="196162"/>
    <lineage>
        <taxon>Bacteria</taxon>
        <taxon>Bacillati</taxon>
        <taxon>Actinomycetota</taxon>
        <taxon>Actinomycetes</taxon>
        <taxon>Propionibacteriales</taxon>
        <taxon>Nocardioidaceae</taxon>
        <taxon>Nocardioides</taxon>
    </lineage>
</organism>
<sequence length="75" mass="8141">MKKDIHPAYVETQVTCTCGATFTTRSTATSGTIHADVCSQCHPFYTGKQKILDTGGRVARFEARYAKKAAADAKK</sequence>
<dbReference type="EMBL" id="CP000509">
    <property type="protein sequence ID" value="ABL81263.1"/>
    <property type="molecule type" value="Genomic_DNA"/>
</dbReference>
<dbReference type="RefSeq" id="WP_011755210.1">
    <property type="nucleotide sequence ID" value="NC_008699.1"/>
</dbReference>
<dbReference type="SMR" id="A1SHH8"/>
<dbReference type="STRING" id="196162.Noca_1750"/>
<dbReference type="KEGG" id="nca:Noca_1750"/>
<dbReference type="eggNOG" id="COG0254">
    <property type="taxonomic scope" value="Bacteria"/>
</dbReference>
<dbReference type="HOGENOM" id="CLU_114306_4_3_11"/>
<dbReference type="OrthoDB" id="9803251at2"/>
<dbReference type="Proteomes" id="UP000000640">
    <property type="component" value="Chromosome"/>
</dbReference>
<dbReference type="GO" id="GO:1990904">
    <property type="term" value="C:ribonucleoprotein complex"/>
    <property type="evidence" value="ECO:0007669"/>
    <property type="project" value="UniProtKB-KW"/>
</dbReference>
<dbReference type="GO" id="GO:0005840">
    <property type="term" value="C:ribosome"/>
    <property type="evidence" value="ECO:0007669"/>
    <property type="project" value="UniProtKB-KW"/>
</dbReference>
<dbReference type="GO" id="GO:0046872">
    <property type="term" value="F:metal ion binding"/>
    <property type="evidence" value="ECO:0007669"/>
    <property type="project" value="UniProtKB-KW"/>
</dbReference>
<dbReference type="GO" id="GO:0019843">
    <property type="term" value="F:rRNA binding"/>
    <property type="evidence" value="ECO:0007669"/>
    <property type="project" value="UniProtKB-KW"/>
</dbReference>
<dbReference type="GO" id="GO:0003735">
    <property type="term" value="F:structural constituent of ribosome"/>
    <property type="evidence" value="ECO:0007669"/>
    <property type="project" value="InterPro"/>
</dbReference>
<dbReference type="GO" id="GO:0006412">
    <property type="term" value="P:translation"/>
    <property type="evidence" value="ECO:0007669"/>
    <property type="project" value="UniProtKB-UniRule"/>
</dbReference>
<dbReference type="Gene3D" id="4.10.830.30">
    <property type="entry name" value="Ribosomal protein L31"/>
    <property type="match status" value="1"/>
</dbReference>
<dbReference type="HAMAP" id="MF_00501">
    <property type="entry name" value="Ribosomal_bL31_1"/>
    <property type="match status" value="1"/>
</dbReference>
<dbReference type="InterPro" id="IPR034704">
    <property type="entry name" value="Ribosomal_bL28/bL31-like_sf"/>
</dbReference>
<dbReference type="InterPro" id="IPR002150">
    <property type="entry name" value="Ribosomal_bL31"/>
</dbReference>
<dbReference type="InterPro" id="IPR027491">
    <property type="entry name" value="Ribosomal_bL31_A"/>
</dbReference>
<dbReference type="InterPro" id="IPR042105">
    <property type="entry name" value="Ribosomal_bL31_sf"/>
</dbReference>
<dbReference type="NCBIfam" id="TIGR00105">
    <property type="entry name" value="L31"/>
    <property type="match status" value="1"/>
</dbReference>
<dbReference type="NCBIfam" id="NF000612">
    <property type="entry name" value="PRK00019.1"/>
    <property type="match status" value="1"/>
</dbReference>
<dbReference type="NCBIfam" id="NF001809">
    <property type="entry name" value="PRK00528.1"/>
    <property type="match status" value="1"/>
</dbReference>
<dbReference type="PANTHER" id="PTHR33280">
    <property type="entry name" value="50S RIBOSOMAL PROTEIN L31, CHLOROPLASTIC"/>
    <property type="match status" value="1"/>
</dbReference>
<dbReference type="PANTHER" id="PTHR33280:SF1">
    <property type="entry name" value="LARGE RIBOSOMAL SUBUNIT PROTEIN BL31C"/>
    <property type="match status" value="1"/>
</dbReference>
<dbReference type="Pfam" id="PF01197">
    <property type="entry name" value="Ribosomal_L31"/>
    <property type="match status" value="1"/>
</dbReference>
<dbReference type="PRINTS" id="PR01249">
    <property type="entry name" value="RIBOSOMALL31"/>
</dbReference>
<dbReference type="SUPFAM" id="SSF143800">
    <property type="entry name" value="L28p-like"/>
    <property type="match status" value="1"/>
</dbReference>
<dbReference type="PROSITE" id="PS01143">
    <property type="entry name" value="RIBOSOMAL_L31"/>
    <property type="match status" value="1"/>
</dbReference>
<protein>
    <recommendedName>
        <fullName evidence="1">Large ribosomal subunit protein bL31</fullName>
    </recommendedName>
    <alternativeName>
        <fullName evidence="2">50S ribosomal protein L31</fullName>
    </alternativeName>
</protein>